<gene>
    <name evidence="1" type="primary">hemC</name>
    <name type="ordered locus">HPAG1_0240</name>
</gene>
<name>HEM3_HELPH</name>
<sequence length="306" mass="34009">MGNLVIGSRGSELALWQANHIKERLKKECLIESEIQIVKTKGDKILDTPLNKIGGKGLFTKELEELLLKGEIDLAVHSLKDVPVVFEKGLDLACITKRADVRDTFLSVKFPDLMSLPKGAKVGTTSLRRSMQIKLKRQDLDTESLRGNVQTRLKKLECGEFDAIILAEAGLCRLEIQGAKYRKAFSVKEMIPSMGQGALGVEMLKNHKHFITLQKLNDEKSAFCCRLEREFIKGLNGGCQIPIGVHASLMGDRVKIQAVLGLPNGKEVIAKEKQGDKTKAFDLVQELLEEFLQSGAKEILEKAQLF</sequence>
<accession>Q1CUR5</accession>
<dbReference type="EC" id="2.5.1.61" evidence="1"/>
<dbReference type="EMBL" id="CP000241">
    <property type="protein sequence ID" value="ABF84307.1"/>
    <property type="molecule type" value="Genomic_DNA"/>
</dbReference>
<dbReference type="RefSeq" id="WP_000527595.1">
    <property type="nucleotide sequence ID" value="NC_008086.1"/>
</dbReference>
<dbReference type="SMR" id="Q1CUR5"/>
<dbReference type="KEGG" id="hpa:HPAG1_0240"/>
<dbReference type="HOGENOM" id="CLU_019704_0_2_7"/>
<dbReference type="UniPathway" id="UPA00251">
    <property type="reaction ID" value="UER00319"/>
</dbReference>
<dbReference type="GO" id="GO:0005737">
    <property type="term" value="C:cytoplasm"/>
    <property type="evidence" value="ECO:0007669"/>
    <property type="project" value="TreeGrafter"/>
</dbReference>
<dbReference type="GO" id="GO:0004418">
    <property type="term" value="F:hydroxymethylbilane synthase activity"/>
    <property type="evidence" value="ECO:0007669"/>
    <property type="project" value="UniProtKB-UniRule"/>
</dbReference>
<dbReference type="GO" id="GO:0006782">
    <property type="term" value="P:protoporphyrinogen IX biosynthetic process"/>
    <property type="evidence" value="ECO:0007669"/>
    <property type="project" value="UniProtKB-UniRule"/>
</dbReference>
<dbReference type="CDD" id="cd13646">
    <property type="entry name" value="PBP2_EcHMBS_like"/>
    <property type="match status" value="1"/>
</dbReference>
<dbReference type="FunFam" id="3.40.190.10:FF:000004">
    <property type="entry name" value="Porphobilinogen deaminase"/>
    <property type="match status" value="1"/>
</dbReference>
<dbReference type="FunFam" id="3.40.190.10:FF:000005">
    <property type="entry name" value="Porphobilinogen deaminase"/>
    <property type="match status" value="1"/>
</dbReference>
<dbReference type="Gene3D" id="3.40.190.10">
    <property type="entry name" value="Periplasmic binding protein-like II"/>
    <property type="match status" value="2"/>
</dbReference>
<dbReference type="Gene3D" id="3.30.160.40">
    <property type="entry name" value="Porphobilinogen deaminase, C-terminal domain"/>
    <property type="match status" value="1"/>
</dbReference>
<dbReference type="HAMAP" id="MF_00260">
    <property type="entry name" value="Porphobil_deam"/>
    <property type="match status" value="1"/>
</dbReference>
<dbReference type="InterPro" id="IPR000860">
    <property type="entry name" value="HemC"/>
</dbReference>
<dbReference type="InterPro" id="IPR022419">
    <property type="entry name" value="Porphobilin_deaminase_cofac_BS"/>
</dbReference>
<dbReference type="InterPro" id="IPR022417">
    <property type="entry name" value="Porphobilin_deaminase_N"/>
</dbReference>
<dbReference type="InterPro" id="IPR022418">
    <property type="entry name" value="Porphobilinogen_deaminase_C"/>
</dbReference>
<dbReference type="InterPro" id="IPR036803">
    <property type="entry name" value="Porphobilinogen_deaminase_C_sf"/>
</dbReference>
<dbReference type="NCBIfam" id="TIGR00212">
    <property type="entry name" value="hemC"/>
    <property type="match status" value="1"/>
</dbReference>
<dbReference type="PANTHER" id="PTHR11557">
    <property type="entry name" value="PORPHOBILINOGEN DEAMINASE"/>
    <property type="match status" value="1"/>
</dbReference>
<dbReference type="PANTHER" id="PTHR11557:SF0">
    <property type="entry name" value="PORPHOBILINOGEN DEAMINASE"/>
    <property type="match status" value="1"/>
</dbReference>
<dbReference type="Pfam" id="PF01379">
    <property type="entry name" value="Porphobil_deam"/>
    <property type="match status" value="1"/>
</dbReference>
<dbReference type="Pfam" id="PF03900">
    <property type="entry name" value="Porphobil_deamC"/>
    <property type="match status" value="1"/>
</dbReference>
<dbReference type="PIRSF" id="PIRSF001438">
    <property type="entry name" value="4pyrrol_synth_OHMeBilane_synth"/>
    <property type="match status" value="1"/>
</dbReference>
<dbReference type="PRINTS" id="PR00151">
    <property type="entry name" value="PORPHBDMNASE"/>
</dbReference>
<dbReference type="SUPFAM" id="SSF53850">
    <property type="entry name" value="Periplasmic binding protein-like II"/>
    <property type="match status" value="1"/>
</dbReference>
<dbReference type="SUPFAM" id="SSF54782">
    <property type="entry name" value="Porphobilinogen deaminase (hydroxymethylbilane synthase), C-terminal domain"/>
    <property type="match status" value="1"/>
</dbReference>
<dbReference type="PROSITE" id="PS00533">
    <property type="entry name" value="PORPHOBILINOGEN_DEAM"/>
    <property type="match status" value="1"/>
</dbReference>
<evidence type="ECO:0000255" key="1">
    <source>
        <dbReference type="HAMAP-Rule" id="MF_00260"/>
    </source>
</evidence>
<feature type="chain" id="PRO_0000304246" description="Porphobilinogen deaminase">
    <location>
        <begin position="1"/>
        <end position="306"/>
    </location>
</feature>
<feature type="modified residue" description="S-(dipyrrolylmethanemethyl)cysteine" evidence="1">
    <location>
        <position position="239"/>
    </location>
</feature>
<protein>
    <recommendedName>
        <fullName evidence="1">Porphobilinogen deaminase</fullName>
        <shortName evidence="1">PBG</shortName>
        <ecNumber evidence="1">2.5.1.61</ecNumber>
    </recommendedName>
    <alternativeName>
        <fullName evidence="1">Hydroxymethylbilane synthase</fullName>
        <shortName evidence="1">HMBS</shortName>
    </alternativeName>
    <alternativeName>
        <fullName evidence="1">Pre-uroporphyrinogen synthase</fullName>
    </alternativeName>
</protein>
<comment type="function">
    <text evidence="1">Tetrapolymerization of the monopyrrole PBG into the hydroxymethylbilane pre-uroporphyrinogen in several discrete steps.</text>
</comment>
<comment type="catalytic activity">
    <reaction evidence="1">
        <text>4 porphobilinogen + H2O = hydroxymethylbilane + 4 NH4(+)</text>
        <dbReference type="Rhea" id="RHEA:13185"/>
        <dbReference type="ChEBI" id="CHEBI:15377"/>
        <dbReference type="ChEBI" id="CHEBI:28938"/>
        <dbReference type="ChEBI" id="CHEBI:57845"/>
        <dbReference type="ChEBI" id="CHEBI:58126"/>
        <dbReference type="EC" id="2.5.1.61"/>
    </reaction>
</comment>
<comment type="cofactor">
    <cofactor evidence="1">
        <name>dipyrromethane</name>
        <dbReference type="ChEBI" id="CHEBI:60342"/>
    </cofactor>
    <text evidence="1">Binds 1 dipyrromethane group covalently.</text>
</comment>
<comment type="pathway">
    <text evidence="1">Porphyrin-containing compound metabolism; protoporphyrin-IX biosynthesis; coproporphyrinogen-III from 5-aminolevulinate: step 2/4.</text>
</comment>
<comment type="subunit">
    <text evidence="1">Monomer.</text>
</comment>
<comment type="miscellaneous">
    <text evidence="1">The porphobilinogen subunits are added to the dipyrromethane group.</text>
</comment>
<comment type="similarity">
    <text evidence="1">Belongs to the HMBS family.</text>
</comment>
<organism>
    <name type="scientific">Helicobacter pylori (strain HPAG1)</name>
    <dbReference type="NCBI Taxonomy" id="357544"/>
    <lineage>
        <taxon>Bacteria</taxon>
        <taxon>Pseudomonadati</taxon>
        <taxon>Campylobacterota</taxon>
        <taxon>Epsilonproteobacteria</taxon>
        <taxon>Campylobacterales</taxon>
        <taxon>Helicobacteraceae</taxon>
        <taxon>Helicobacter</taxon>
    </lineage>
</organism>
<keyword id="KW-0627">Porphyrin biosynthesis</keyword>
<keyword id="KW-0808">Transferase</keyword>
<proteinExistence type="inferred from homology"/>
<reference key="1">
    <citation type="journal article" date="2006" name="Proc. Natl. Acad. Sci. U.S.A.">
        <title>The complete genome sequence of a chronic atrophic gastritis Helicobacter pylori strain: evolution during disease progression.</title>
        <authorList>
            <person name="Oh J.D."/>
            <person name="Kling-Baeckhed H."/>
            <person name="Giannakis M."/>
            <person name="Xu J."/>
            <person name="Fulton R.S."/>
            <person name="Fulton L.A."/>
            <person name="Cordum H.S."/>
            <person name="Wang C."/>
            <person name="Elliott G."/>
            <person name="Edwards J."/>
            <person name="Mardis E.R."/>
            <person name="Engstrand L.G."/>
            <person name="Gordon J.I."/>
        </authorList>
    </citation>
    <scope>NUCLEOTIDE SEQUENCE [LARGE SCALE GENOMIC DNA]</scope>
    <source>
        <strain>HPAG1</strain>
    </source>
</reference>